<organism>
    <name type="scientific">Mannheimia succiniciproducens (strain KCTC 0769BP / MBEL55E)</name>
    <dbReference type="NCBI Taxonomy" id="221988"/>
    <lineage>
        <taxon>Bacteria</taxon>
        <taxon>Pseudomonadati</taxon>
        <taxon>Pseudomonadota</taxon>
        <taxon>Gammaproteobacteria</taxon>
        <taxon>Pasteurellales</taxon>
        <taxon>Pasteurellaceae</taxon>
        <taxon>Basfia</taxon>
    </lineage>
</organism>
<comment type="similarity">
    <text evidence="1">Belongs to the UPF0235 family.</text>
</comment>
<protein>
    <recommendedName>
        <fullName evidence="1">UPF0235 protein MS0322</fullName>
    </recommendedName>
</protein>
<evidence type="ECO:0000255" key="1">
    <source>
        <dbReference type="HAMAP-Rule" id="MF_00634"/>
    </source>
</evidence>
<name>Y322_MANSM</name>
<reference key="1">
    <citation type="journal article" date="2004" name="Nat. Biotechnol.">
        <title>The genome sequence of the capnophilic rumen bacterium Mannheimia succiniciproducens.</title>
        <authorList>
            <person name="Hong S.H."/>
            <person name="Kim J.S."/>
            <person name="Lee S.Y."/>
            <person name="In Y.H."/>
            <person name="Choi S.S."/>
            <person name="Rih J.-K."/>
            <person name="Kim C.H."/>
            <person name="Jeong H."/>
            <person name="Hur C.G."/>
            <person name="Kim J.J."/>
        </authorList>
    </citation>
    <scope>NUCLEOTIDE SEQUENCE [LARGE SCALE GENOMIC DNA]</scope>
    <source>
        <strain>KCTC 0769BP / MBEL55E</strain>
    </source>
</reference>
<proteinExistence type="inferred from homology"/>
<dbReference type="EMBL" id="AE016827">
    <property type="protein sequence ID" value="AAU36929.1"/>
    <property type="molecule type" value="Genomic_DNA"/>
</dbReference>
<dbReference type="RefSeq" id="WP_011199504.1">
    <property type="nucleotide sequence ID" value="NC_006300.1"/>
</dbReference>
<dbReference type="SMR" id="Q65VT1"/>
<dbReference type="STRING" id="221988.MS0322"/>
<dbReference type="KEGG" id="msu:MS0322"/>
<dbReference type="eggNOG" id="COG1872">
    <property type="taxonomic scope" value="Bacteria"/>
</dbReference>
<dbReference type="HOGENOM" id="CLU_130694_5_0_6"/>
<dbReference type="OrthoDB" id="9800587at2"/>
<dbReference type="Proteomes" id="UP000000607">
    <property type="component" value="Chromosome"/>
</dbReference>
<dbReference type="GO" id="GO:0005737">
    <property type="term" value="C:cytoplasm"/>
    <property type="evidence" value="ECO:0007669"/>
    <property type="project" value="TreeGrafter"/>
</dbReference>
<dbReference type="Gene3D" id="3.30.1200.10">
    <property type="entry name" value="YggU-like"/>
    <property type="match status" value="1"/>
</dbReference>
<dbReference type="HAMAP" id="MF_00634">
    <property type="entry name" value="UPF0235"/>
    <property type="match status" value="1"/>
</dbReference>
<dbReference type="InterPro" id="IPR003746">
    <property type="entry name" value="DUF167"/>
</dbReference>
<dbReference type="InterPro" id="IPR036591">
    <property type="entry name" value="YggU-like_sf"/>
</dbReference>
<dbReference type="NCBIfam" id="TIGR00251">
    <property type="entry name" value="DUF167 family protein"/>
    <property type="match status" value="1"/>
</dbReference>
<dbReference type="NCBIfam" id="NF003466">
    <property type="entry name" value="PRK05090.1"/>
    <property type="match status" value="1"/>
</dbReference>
<dbReference type="PANTHER" id="PTHR13420">
    <property type="entry name" value="UPF0235 PROTEIN C15ORF40"/>
    <property type="match status" value="1"/>
</dbReference>
<dbReference type="PANTHER" id="PTHR13420:SF7">
    <property type="entry name" value="UPF0235 PROTEIN C15ORF40"/>
    <property type="match status" value="1"/>
</dbReference>
<dbReference type="Pfam" id="PF02594">
    <property type="entry name" value="DUF167"/>
    <property type="match status" value="1"/>
</dbReference>
<dbReference type="SMART" id="SM01152">
    <property type="entry name" value="DUF167"/>
    <property type="match status" value="1"/>
</dbReference>
<dbReference type="SUPFAM" id="SSF69786">
    <property type="entry name" value="YggU-like"/>
    <property type="match status" value="1"/>
</dbReference>
<feature type="chain" id="PRO_1000072669" description="UPF0235 protein MS0322">
    <location>
        <begin position="1"/>
        <end position="95"/>
    </location>
</feature>
<gene>
    <name type="ordered locus">MS0322</name>
</gene>
<accession>Q65VT1</accession>
<sequence length="95" mass="10600">MSAIEQTAEGLRLRIFLQPKASRDKIIGIHDDELKIAITAPPVDGAANAHLLKYLSKAFKVPKSAIILEKGELNRHKQLFIPEPKLIPEELQPLL</sequence>